<gene>
    <name type="primary">OPG048</name>
    <name type="ORF">F4L</name>
</gene>
<comment type="function">
    <text evidence="2">Ribonucleoside-diphosphate reductase holoenzyme provides the precursors necessary for viral DNA synthesis. Allows virus growth in non-dividing cells. Catalyzes the biosynthesis of deoxyribonucleotides from the corresponding ribonucleotides.</text>
</comment>
<comment type="catalytic activity">
    <reaction evidence="3">
        <text>a 2'-deoxyribonucleoside 5'-diphosphate + [thioredoxin]-disulfide + H2O = a ribonucleoside 5'-diphosphate + [thioredoxin]-dithiol</text>
        <dbReference type="Rhea" id="RHEA:23252"/>
        <dbReference type="Rhea" id="RHEA-COMP:10698"/>
        <dbReference type="Rhea" id="RHEA-COMP:10700"/>
        <dbReference type="ChEBI" id="CHEBI:15377"/>
        <dbReference type="ChEBI" id="CHEBI:29950"/>
        <dbReference type="ChEBI" id="CHEBI:50058"/>
        <dbReference type="ChEBI" id="CHEBI:57930"/>
        <dbReference type="ChEBI" id="CHEBI:73316"/>
        <dbReference type="EC" id="1.17.4.1"/>
    </reaction>
</comment>
<comment type="cofactor">
    <cofactor evidence="1">
        <name>Fe cation</name>
        <dbReference type="ChEBI" id="CHEBI:24875"/>
    </cofactor>
    <text evidence="1">Binds 2 iron ions per subunit.</text>
</comment>
<comment type="subunit">
    <text evidence="2">Interacts with RNR1/OPG080 subunit. Can interact with host RNR1 supunit.</text>
</comment>
<comment type="induction">
    <text>Expressed early in the viral replicative cycle.</text>
</comment>
<comment type="similarity">
    <text evidence="4">Belongs to the ribonucleoside diphosphate reductase small chain family.</text>
</comment>
<dbReference type="EC" id="1.17.4.1"/>
<dbReference type="EMBL" id="M35027">
    <property type="protein sequence ID" value="AAA48018.1"/>
    <property type="molecule type" value="Genomic_DNA"/>
</dbReference>
<dbReference type="SMR" id="P20493"/>
<dbReference type="Proteomes" id="UP000008269">
    <property type="component" value="Segment"/>
</dbReference>
<dbReference type="GO" id="GO:0046872">
    <property type="term" value="F:metal ion binding"/>
    <property type="evidence" value="ECO:0007669"/>
    <property type="project" value="UniProtKB-KW"/>
</dbReference>
<dbReference type="GO" id="GO:0004748">
    <property type="term" value="F:ribonucleoside-diphosphate reductase activity, thioredoxin disulfide as acceptor"/>
    <property type="evidence" value="ECO:0007669"/>
    <property type="project" value="UniProtKB-EC"/>
</dbReference>
<dbReference type="GO" id="GO:0009263">
    <property type="term" value="P:deoxyribonucleotide biosynthetic process"/>
    <property type="evidence" value="ECO:0007669"/>
    <property type="project" value="UniProtKB-KW"/>
</dbReference>
<dbReference type="CDD" id="cd01049">
    <property type="entry name" value="RNRR2"/>
    <property type="match status" value="1"/>
</dbReference>
<dbReference type="FunFam" id="1.10.620.20:FF:000004">
    <property type="entry name" value="Ribonucleoside-diphosphate reductase subunit M2 B"/>
    <property type="match status" value="1"/>
</dbReference>
<dbReference type="Gene3D" id="1.10.620.20">
    <property type="entry name" value="Ribonucleotide Reductase, subunit A"/>
    <property type="match status" value="1"/>
</dbReference>
<dbReference type="InterPro" id="IPR009078">
    <property type="entry name" value="Ferritin-like_SF"/>
</dbReference>
<dbReference type="InterPro" id="IPR012348">
    <property type="entry name" value="RNR-like"/>
</dbReference>
<dbReference type="InterPro" id="IPR033909">
    <property type="entry name" value="RNR_small"/>
</dbReference>
<dbReference type="InterPro" id="IPR030475">
    <property type="entry name" value="RNR_small_AS"/>
</dbReference>
<dbReference type="InterPro" id="IPR000358">
    <property type="entry name" value="RNR_small_fam"/>
</dbReference>
<dbReference type="PANTHER" id="PTHR23409">
    <property type="entry name" value="RIBONUCLEOSIDE-DIPHOSPHATE REDUCTASE SMALL CHAIN"/>
    <property type="match status" value="1"/>
</dbReference>
<dbReference type="PANTHER" id="PTHR23409:SF18">
    <property type="entry name" value="RIBONUCLEOSIDE-DIPHOSPHATE REDUCTASE SUBUNIT M2"/>
    <property type="match status" value="1"/>
</dbReference>
<dbReference type="Pfam" id="PF00268">
    <property type="entry name" value="Ribonuc_red_sm"/>
    <property type="match status" value="1"/>
</dbReference>
<dbReference type="SUPFAM" id="SSF47240">
    <property type="entry name" value="Ferritin-like"/>
    <property type="match status" value="1"/>
</dbReference>
<dbReference type="PROSITE" id="PS00368">
    <property type="entry name" value="RIBORED_SMALL"/>
    <property type="match status" value="1"/>
</dbReference>
<name>RIR2_VACCC</name>
<keyword id="KW-0215">Deoxyribonucleotide synthesis</keyword>
<keyword id="KW-0244">Early protein</keyword>
<keyword id="KW-0408">Iron</keyword>
<keyword id="KW-0479">Metal-binding</keyword>
<keyword id="KW-0560">Oxidoreductase</keyword>
<keyword id="KW-1185">Reference proteome</keyword>
<sequence length="319" mass="36999">MEPILAPNPNRFVIFPIQYYDIWNMYKKAEASFWTVEEVDISKDINDWNKLTPDEKYFIKHVLAFFAASDGIVNENLAERFCTEVQITEARCFYGFQMAIENIHSEMYSLLIDTYVKDSNEKNYLFNAIETMPCVKKKADWAQKWIHDSAGYGERLIAFAAVEGIFFSGSFASIFWLKKRGLMPGLTFSNELISRDEGLHCDFACLMFKHLLYPPSEETVRSIITDAVSIEQEFLTAALPVKLIGMNCEMMKTYIEFVADRLISELGFKKIYNVTNPFDFMENISLEGKTNFFEKRVGEYQKMGVMSQEDNHFSLDVDF</sequence>
<feature type="chain" id="PRO_0000190496" description="Ribonucleoside-diphosphate reductase small chain">
    <location>
        <begin position="1"/>
        <end position="319"/>
    </location>
</feature>
<feature type="region of interest" description="Interaction with R1" evidence="2">
    <location>
        <begin position="313"/>
        <end position="319"/>
    </location>
</feature>
<feature type="active site" evidence="3">
    <location>
        <position position="108"/>
    </location>
</feature>
<feature type="binding site" evidence="3">
    <location>
        <position position="70"/>
    </location>
    <ligand>
        <name>Fe cation</name>
        <dbReference type="ChEBI" id="CHEBI:24875"/>
        <label>1</label>
    </ligand>
</feature>
<feature type="binding site" evidence="3">
    <location>
        <position position="101"/>
    </location>
    <ligand>
        <name>Fe cation</name>
        <dbReference type="ChEBI" id="CHEBI:24875"/>
        <label>1</label>
    </ligand>
</feature>
<feature type="binding site" evidence="1">
    <location>
        <position position="101"/>
    </location>
    <ligand>
        <name>Fe cation</name>
        <dbReference type="ChEBI" id="CHEBI:24875"/>
        <label>2</label>
    </ligand>
</feature>
<feature type="binding site" evidence="3">
    <location>
        <position position="104"/>
    </location>
    <ligand>
        <name>Fe cation</name>
        <dbReference type="ChEBI" id="CHEBI:24875"/>
        <label>1</label>
    </ligand>
</feature>
<feature type="binding site" evidence="1">
    <location>
        <position position="163"/>
    </location>
    <ligand>
        <name>Fe cation</name>
        <dbReference type="ChEBI" id="CHEBI:24875"/>
        <label>2</label>
    </ligand>
</feature>
<feature type="binding site" evidence="1">
    <location>
        <position position="197"/>
    </location>
    <ligand>
        <name>Fe cation</name>
        <dbReference type="ChEBI" id="CHEBI:24875"/>
        <label>2</label>
    </ligand>
</feature>
<feature type="binding site" evidence="1">
    <location>
        <position position="200"/>
    </location>
    <ligand>
        <name>Fe cation</name>
        <dbReference type="ChEBI" id="CHEBI:24875"/>
        <label>2</label>
    </ligand>
</feature>
<reference key="1">
    <citation type="journal article" date="1990" name="Virology">
        <title>The complete DNA sequence of vaccinia virus.</title>
        <authorList>
            <person name="Goebel S.J."/>
            <person name="Johnson G.P."/>
            <person name="Perkus M.E."/>
            <person name="Davis S.W."/>
            <person name="Winslow J.P."/>
            <person name="Paoletti E."/>
        </authorList>
    </citation>
    <scope>NUCLEOTIDE SEQUENCE [LARGE SCALE GENOMIC DNA]</scope>
</reference>
<reference key="2">
    <citation type="journal article" date="1990" name="Virology">
        <title>Appendix to 'The complete DNA sequence of vaccinia virus'.</title>
        <authorList>
            <person name="Goebel S.J."/>
            <person name="Johnson G.P."/>
            <person name="Perkus M.E."/>
            <person name="Davis S.W."/>
            <person name="Winslow J.P."/>
            <person name="Paoletti E."/>
        </authorList>
    </citation>
    <scope>COMPLETE GENOME</scope>
</reference>
<organism>
    <name type="scientific">Vaccinia virus (strain Copenhagen)</name>
    <name type="common">VACV</name>
    <dbReference type="NCBI Taxonomy" id="10249"/>
    <lineage>
        <taxon>Viruses</taxon>
        <taxon>Varidnaviria</taxon>
        <taxon>Bamfordvirae</taxon>
        <taxon>Nucleocytoviricota</taxon>
        <taxon>Pokkesviricetes</taxon>
        <taxon>Chitovirales</taxon>
        <taxon>Poxviridae</taxon>
        <taxon>Chordopoxvirinae</taxon>
        <taxon>Orthopoxvirus</taxon>
        <taxon>Vaccinia virus</taxon>
    </lineage>
</organism>
<evidence type="ECO:0000250" key="1"/>
<evidence type="ECO:0000250" key="2">
    <source>
        <dbReference type="UniProtKB" id="P11158"/>
    </source>
</evidence>
<evidence type="ECO:0000255" key="3">
    <source>
        <dbReference type="PROSITE-ProRule" id="PRU10014"/>
    </source>
</evidence>
<evidence type="ECO:0000305" key="4"/>
<proteinExistence type="evidence at transcript level"/>
<organismHost>
    <name type="scientific">Homo sapiens</name>
    <name type="common">Human</name>
    <dbReference type="NCBI Taxonomy" id="9606"/>
</organismHost>
<protein>
    <recommendedName>
        <fullName>Ribonucleoside-diphosphate reductase small chain</fullName>
        <ecNumber>1.17.4.1</ecNumber>
    </recommendedName>
    <alternativeName>
        <fullName>Ribonucleotide reductase small subunit</fullName>
    </alternativeName>
    <alternativeName>
        <fullName>Ribonucleotide reductase subunit 2</fullName>
        <shortName>RNR2</shortName>
    </alternativeName>
</protein>
<accession>P20493</accession>